<gene>
    <name evidence="1" type="primary">cedA</name>
    <name type="ordered locus">STY1792</name>
    <name type="ordered locus">t1199</name>
</gene>
<reference key="1">
    <citation type="journal article" date="2001" name="Nature">
        <title>Complete genome sequence of a multiple drug resistant Salmonella enterica serovar Typhi CT18.</title>
        <authorList>
            <person name="Parkhill J."/>
            <person name="Dougan G."/>
            <person name="James K.D."/>
            <person name="Thomson N.R."/>
            <person name="Pickard D."/>
            <person name="Wain J."/>
            <person name="Churcher C.M."/>
            <person name="Mungall K.L."/>
            <person name="Bentley S.D."/>
            <person name="Holden M.T.G."/>
            <person name="Sebaihia M."/>
            <person name="Baker S."/>
            <person name="Basham D."/>
            <person name="Brooks K."/>
            <person name="Chillingworth T."/>
            <person name="Connerton P."/>
            <person name="Cronin A."/>
            <person name="Davis P."/>
            <person name="Davies R.M."/>
            <person name="Dowd L."/>
            <person name="White N."/>
            <person name="Farrar J."/>
            <person name="Feltwell T."/>
            <person name="Hamlin N."/>
            <person name="Haque A."/>
            <person name="Hien T.T."/>
            <person name="Holroyd S."/>
            <person name="Jagels K."/>
            <person name="Krogh A."/>
            <person name="Larsen T.S."/>
            <person name="Leather S."/>
            <person name="Moule S."/>
            <person name="O'Gaora P."/>
            <person name="Parry C."/>
            <person name="Quail M.A."/>
            <person name="Rutherford K.M."/>
            <person name="Simmonds M."/>
            <person name="Skelton J."/>
            <person name="Stevens K."/>
            <person name="Whitehead S."/>
            <person name="Barrell B.G."/>
        </authorList>
    </citation>
    <scope>NUCLEOTIDE SEQUENCE [LARGE SCALE GENOMIC DNA]</scope>
    <source>
        <strain>CT18</strain>
    </source>
</reference>
<reference key="2">
    <citation type="journal article" date="2003" name="J. Bacteriol.">
        <title>Comparative genomics of Salmonella enterica serovar Typhi strains Ty2 and CT18.</title>
        <authorList>
            <person name="Deng W."/>
            <person name="Liou S.-R."/>
            <person name="Plunkett G. III"/>
            <person name="Mayhew G.F."/>
            <person name="Rose D.J."/>
            <person name="Burland V."/>
            <person name="Kodoyianni V."/>
            <person name="Schwartz D.C."/>
            <person name="Blattner F.R."/>
        </authorList>
    </citation>
    <scope>NUCLEOTIDE SEQUENCE [LARGE SCALE GENOMIC DNA]</scope>
    <source>
        <strain>ATCC 700931 / Ty2</strain>
    </source>
</reference>
<comment type="function">
    <text evidence="1">Activates the cell division inhibited by chromosomal DNA over-replication.</text>
</comment>
<comment type="similarity">
    <text evidence="1">Belongs to the CedA family.</text>
</comment>
<organism>
    <name type="scientific">Salmonella typhi</name>
    <dbReference type="NCBI Taxonomy" id="90370"/>
    <lineage>
        <taxon>Bacteria</taxon>
        <taxon>Pseudomonadati</taxon>
        <taxon>Pseudomonadota</taxon>
        <taxon>Gammaproteobacteria</taxon>
        <taxon>Enterobacterales</taxon>
        <taxon>Enterobacteriaceae</taxon>
        <taxon>Salmonella</taxon>
    </lineage>
</organism>
<protein>
    <recommendedName>
        <fullName evidence="1">Cell division activator CedA</fullName>
    </recommendedName>
</protein>
<feature type="chain" id="PRO_0000300215" description="Cell division activator CedA">
    <location>
        <begin position="1"/>
        <end position="80"/>
    </location>
</feature>
<keyword id="KW-0131">Cell cycle</keyword>
<keyword id="KW-0132">Cell division</keyword>
<keyword id="KW-0238">DNA-binding</keyword>
<evidence type="ECO:0000255" key="1">
    <source>
        <dbReference type="HAMAP-Rule" id="MF_01580"/>
    </source>
</evidence>
<accession>Q8Z6H2</accession>
<accession>Q7CA87</accession>
<name>CEDA_SALTI</name>
<sequence length="80" mass="9372">MMKPLRQQNRQIISYIPRVEPAPPEHAIKMDTFRDVWILRGKYVAFVLTGESFQRSPAFSVPESAQRWANQVRQENEIAD</sequence>
<proteinExistence type="inferred from homology"/>
<dbReference type="EMBL" id="AL513382">
    <property type="protein sequence ID" value="CAD02034.1"/>
    <property type="molecule type" value="Genomic_DNA"/>
</dbReference>
<dbReference type="EMBL" id="AE014613">
    <property type="protein sequence ID" value="AAO68855.1"/>
    <property type="molecule type" value="Genomic_DNA"/>
</dbReference>
<dbReference type="RefSeq" id="NP_456192.1">
    <property type="nucleotide sequence ID" value="NC_003198.1"/>
</dbReference>
<dbReference type="RefSeq" id="WP_000977510.1">
    <property type="nucleotide sequence ID" value="NZ_WSUR01000011.1"/>
</dbReference>
<dbReference type="SMR" id="Q8Z6H2"/>
<dbReference type="STRING" id="220341.gene:17585726"/>
<dbReference type="KEGG" id="stt:t1199"/>
<dbReference type="KEGG" id="sty:STY1792"/>
<dbReference type="PATRIC" id="fig|220341.7.peg.1805"/>
<dbReference type="eggNOG" id="ENOG5032S26">
    <property type="taxonomic scope" value="Bacteria"/>
</dbReference>
<dbReference type="HOGENOM" id="CLU_167445_0_0_6"/>
<dbReference type="OMA" id="HAIKMDA"/>
<dbReference type="OrthoDB" id="6570002at2"/>
<dbReference type="Proteomes" id="UP000000541">
    <property type="component" value="Chromosome"/>
</dbReference>
<dbReference type="Proteomes" id="UP000002670">
    <property type="component" value="Chromosome"/>
</dbReference>
<dbReference type="GO" id="GO:0003677">
    <property type="term" value="F:DNA binding"/>
    <property type="evidence" value="ECO:0007669"/>
    <property type="project" value="UniProtKB-UniRule"/>
</dbReference>
<dbReference type="GO" id="GO:0051301">
    <property type="term" value="P:cell division"/>
    <property type="evidence" value="ECO:0007669"/>
    <property type="project" value="UniProtKB-UniRule"/>
</dbReference>
<dbReference type="Gene3D" id="3.30.730.20">
    <property type="entry name" value="Cell division activator CedA"/>
    <property type="match status" value="1"/>
</dbReference>
<dbReference type="HAMAP" id="MF_01580">
    <property type="entry name" value="CedA"/>
    <property type="match status" value="1"/>
</dbReference>
<dbReference type="InterPro" id="IPR038463">
    <property type="entry name" value="CedA-like_sf"/>
</dbReference>
<dbReference type="InterPro" id="IPR019666">
    <property type="entry name" value="Cell_div_activator_CedA"/>
</dbReference>
<dbReference type="NCBIfam" id="NF007510">
    <property type="entry name" value="PRK10113.1"/>
    <property type="match status" value="1"/>
</dbReference>
<dbReference type="Pfam" id="PF10729">
    <property type="entry name" value="CedA"/>
    <property type="match status" value="1"/>
</dbReference>